<gene>
    <name type="primary">UL8</name>
</gene>
<reference key="1">
    <citation type="journal article" date="1990" name="Curr. Top. Microbiol. Immunol.">
        <title>Analysis of the protein-coding content of the sequence of human cytomegalovirus strain AD169.</title>
        <authorList>
            <person name="Chee M.S."/>
            <person name="Bankier A.T."/>
            <person name="Beck S."/>
            <person name="Bohni R."/>
            <person name="Brown C.M."/>
            <person name="Cerny R."/>
            <person name="Horsnell T."/>
            <person name="Hutchison C.A. III"/>
            <person name="Kouzarides T."/>
            <person name="Martignetti J.A."/>
            <person name="Preddie E."/>
            <person name="Satchwell S.C."/>
            <person name="Tomlinson P."/>
            <person name="Weston K.M."/>
            <person name="Barrell B.G."/>
        </authorList>
    </citation>
    <scope>NUCLEOTIDE SEQUENCE [LARGE SCALE GENOMIC DNA]</scope>
</reference>
<reference key="2">
    <citation type="journal article" date="2003" name="J. Gen. Virol.">
        <title>The human cytomegalovirus genome revisited: comparison with the chimpanzee cytomegalovirus genome.</title>
        <authorList>
            <person name="Davison A.J."/>
            <person name="Dolan A."/>
            <person name="Akter P."/>
            <person name="Addison C."/>
            <person name="Dargan D.J."/>
            <person name="Alcendor D.J."/>
            <person name="McGeoch D.J."/>
            <person name="Hayward G.S."/>
        </authorList>
    </citation>
    <scope>GENOME REANNOTATION</scope>
</reference>
<reference key="3">
    <citation type="journal article" date="2003" name="J. Gen. Virol.">
        <authorList>
            <person name="Davison A.J."/>
            <person name="Dolan A."/>
            <person name="Akter P."/>
            <person name="Addison C."/>
            <person name="Dargan D.J."/>
            <person name="Alcendor D.J."/>
            <person name="McGeoch D.J."/>
            <person name="Hayward G.S."/>
        </authorList>
    </citation>
    <scope>ERRATUM OF PUBMED:12533697</scope>
</reference>
<reference key="4">
    <citation type="journal article" date="2003" name="J. Gen. Virol.">
        <title>Homology between the human cytomegalovirus RL11 gene family and human adenovirus E3 genes.</title>
        <authorList>
            <person name="Davison A.J."/>
            <person name="Akter P."/>
            <person name="Cunningham C."/>
            <person name="Dolan A."/>
            <person name="Addison C."/>
            <person name="Dargan D.J."/>
            <person name="Hassan-Walker A.F."/>
            <person name="Emery V.C."/>
            <person name="Griffiths P.D."/>
            <person name="Wilkinson G.W."/>
        </authorList>
    </citation>
    <scope>GENE FAMILY</scope>
</reference>
<reference key="5">
    <citation type="journal article" date="2018" name="J. Virol.">
        <title>A prominent role of the human cytomegalovirus UL8 glycoprotein restraining pro-inflammatory cytokine production by myeloid cells at late times during infection.</title>
        <authorList>
            <person name="Perez-Carmona N."/>
            <person name="Martinez-Vicente P."/>
            <person name="Farre D."/>
            <person name="Gabaev I."/>
            <person name="Messerle M."/>
            <person name="Engel P."/>
            <person name="Angulo A."/>
        </authorList>
    </citation>
    <scope>FUNCTION</scope>
    <scope>SUBCELLULAR LOCATION</scope>
    <scope>GLYCOSYLATION</scope>
</reference>
<feature type="chain" id="PRO_0000115305" description="Membrane protein UL8">
    <location>
        <begin position="1"/>
        <end position="324"/>
    </location>
</feature>
<feature type="transmembrane region" description="Helical" evidence="1">
    <location>
        <begin position="278"/>
        <end position="298"/>
    </location>
</feature>
<feature type="region of interest" description="Immunoglobulin V-like domain" evidence="3">
    <location>
        <begin position="36"/>
        <end position="138"/>
    </location>
</feature>
<protein>
    <recommendedName>
        <fullName>Membrane protein UL8</fullName>
    </recommendedName>
</protein>
<organismHost>
    <name type="scientific">Homo sapiens</name>
    <name type="common">Human</name>
    <dbReference type="NCBI Taxonomy" id="9606"/>
</organismHost>
<accession>P16744</accession>
<accession>B8YE45</accession>
<accession>Q7M6L2</accession>
<organism>
    <name type="scientific">Human cytomegalovirus (strain AD169)</name>
    <name type="common">HHV-5</name>
    <name type="synonym">Human herpesvirus 5</name>
    <dbReference type="NCBI Taxonomy" id="10360"/>
    <lineage>
        <taxon>Viruses</taxon>
        <taxon>Duplodnaviria</taxon>
        <taxon>Heunggongvirae</taxon>
        <taxon>Peploviricota</taxon>
        <taxon>Herviviricetes</taxon>
        <taxon>Herpesvirales</taxon>
        <taxon>Orthoherpesviridae</taxon>
        <taxon>Betaherpesvirinae</taxon>
        <taxon>Cytomegalovirus</taxon>
        <taxon>Cytomegalovirus humanbeta5</taxon>
        <taxon>Human cytomegalovirus</taxon>
    </lineage>
</organism>
<dbReference type="EMBL" id="X17403">
    <property type="protein sequence ID" value="CAA35441.1"/>
    <property type="status" value="ALT_SEQ"/>
    <property type="molecule type" value="Genomic_DNA"/>
</dbReference>
<dbReference type="EMBL" id="BK000394">
    <property type="protein sequence ID" value="DAA00176.1"/>
    <property type="status" value="ALT_SEQ"/>
    <property type="molecule type" value="Genomic_DNA"/>
</dbReference>
<dbReference type="EMBL" id="FJ527563">
    <property type="protein sequence ID" value="ACL51089.2"/>
    <property type="molecule type" value="Genomic_DNA"/>
</dbReference>
<dbReference type="PIR" id="S09771">
    <property type="entry name" value="S09771"/>
</dbReference>
<dbReference type="SMR" id="P16744"/>
<dbReference type="Proteomes" id="UP000008991">
    <property type="component" value="Segment"/>
</dbReference>
<dbReference type="Proteomes" id="UP000008992">
    <property type="component" value="Segment"/>
</dbReference>
<dbReference type="Proteomes" id="UP000180728">
    <property type="component" value="Segment"/>
</dbReference>
<dbReference type="GO" id="GO:0020002">
    <property type="term" value="C:host cell plasma membrane"/>
    <property type="evidence" value="ECO:0007669"/>
    <property type="project" value="UniProtKB-SubCell"/>
</dbReference>
<dbReference type="GO" id="GO:0016020">
    <property type="term" value="C:membrane"/>
    <property type="evidence" value="ECO:0007669"/>
    <property type="project" value="UniProtKB-KW"/>
</dbReference>
<dbReference type="GO" id="GO:0141173">
    <property type="term" value="P:symbiont-mediated suppression of host pro-inflammatory cytokine signaling"/>
    <property type="evidence" value="ECO:0000269"/>
    <property type="project" value="SigSci"/>
</dbReference>
<dbReference type="Gene3D" id="2.60.40.10">
    <property type="entry name" value="Immunoglobulins"/>
    <property type="match status" value="1"/>
</dbReference>
<dbReference type="InterPro" id="IPR036179">
    <property type="entry name" value="Ig-like_dom_sf"/>
</dbReference>
<dbReference type="InterPro" id="IPR013783">
    <property type="entry name" value="Ig-like_fold"/>
</dbReference>
<dbReference type="SUPFAM" id="SSF48726">
    <property type="entry name" value="Immunoglobulin"/>
    <property type="match status" value="1"/>
</dbReference>
<sequence length="324" mass="35797">MASDVSSHLLTVTQSRWTIHHMYNKLLILALFTPVILESIIYVSGPQGGNVTLVSNFTSNISARWFRWDGNDSHLICFYKRGEGLSTPYVGLSLSCAANQITIFNLTLNDSGRYGAEGFTRSGENETFLWYNLTVKPKPLETTTASNVTTIVTTTPTVIGTKSNVTGNASLAPQLRAVAGFLNQTPRENNTHLALGEGFVPTMTNPGLYASENYNGNYELTEAANTARTNSSDWVTLGTSASLLRSTETAVNPSNATTVTPQPVEYPAGEVQYQRTKTHYSWMLIIAIILIIFIIICLRAPQKVYDRWKDNKQYGQVFMTDTEL</sequence>
<evidence type="ECO:0000255" key="1"/>
<evidence type="ECO:0000269" key="2">
    <source>
    </source>
</evidence>
<evidence type="ECO:0000269" key="3">
    <source>
    </source>
</evidence>
<keyword id="KW-0325">Glycoprotein</keyword>
<keyword id="KW-1032">Host cell membrane</keyword>
<keyword id="KW-1043">Host membrane</keyword>
<keyword id="KW-0472">Membrane</keyword>
<keyword id="KW-1185">Reference proteome</keyword>
<keyword id="KW-0812">Transmembrane</keyword>
<keyword id="KW-1133">Transmembrane helix</keyword>
<comment type="function">
    <text evidence="3">Plays a role in the inhibition of pro-inflammatory cytokine production. This effect is mediated by the conserved Ig-like domain.</text>
</comment>
<comment type="subcellular location">
    <subcellularLocation>
        <location evidence="3">Host cell membrane</location>
        <topology evidence="1">Single-pass membrane protein</topology>
    </subcellularLocation>
</comment>
<comment type="induction">
    <text evidence="3">Expressed at late times of infection.</text>
</comment>
<comment type="PTM">
    <text evidence="3">Highly glycosylated.</text>
</comment>
<comment type="similarity">
    <text evidence="2">Belongs to the RL11 family.</text>
</comment>
<proteinExistence type="evidence at protein level"/>
<name>UL08_HCMVA</name>